<name>ATP8_DICLA</name>
<organism>
    <name type="scientific">Dicentrarchus labrax</name>
    <name type="common">European seabass</name>
    <name type="synonym">Morone labrax</name>
    <dbReference type="NCBI Taxonomy" id="13489"/>
    <lineage>
        <taxon>Eukaryota</taxon>
        <taxon>Metazoa</taxon>
        <taxon>Chordata</taxon>
        <taxon>Craniata</taxon>
        <taxon>Vertebrata</taxon>
        <taxon>Euteleostomi</taxon>
        <taxon>Actinopterygii</taxon>
        <taxon>Neopterygii</taxon>
        <taxon>Teleostei</taxon>
        <taxon>Neoteleostei</taxon>
        <taxon>Acanthomorphata</taxon>
        <taxon>Eupercaria</taxon>
        <taxon>Moronidae</taxon>
        <taxon>Dicentrarchus</taxon>
    </lineage>
</organism>
<gene>
    <name evidence="1" type="primary">mt-atp8</name>
    <name type="synonym">atp8</name>
    <name type="synonym">atpase8</name>
    <name type="synonym">mtatp8</name>
</gene>
<proteinExistence type="inferred from homology"/>
<comment type="function">
    <text evidence="1 2">Subunit 8, of the mitochondrial membrane ATP synthase complex (F(1)F(0) ATP synthase or Complex V) that produces ATP from ADP in the presence of a proton gradient across the membrane which is generated by electron transport complexes of the respiratory chain. ATP synthase complex consist of a soluble F(1) head domain - the catalytic core - and a membrane F(1) domain - the membrane proton channel. These two domains are linked by a central stalk rotating inside the F(1) region and a stationary peripheral stalk. During catalysis, ATP synthesis in the catalytic domain of F(1) is coupled via a rotary mechanism of the central stalk subunits to proton translocation (By similarity). In vivo, can only synthesize ATP although its ATP hydrolase activity can be activated artificially in vitro (By similarity). Part of the complex F(0) domain (By similarity).</text>
</comment>
<comment type="subunit">
    <text evidence="1">Component of the ATP synthase complex composed at least of ATP5F1A/subunit alpha, ATP5F1B/subunit beta, ATP5MC1/subunit c (homooctomer), MT-ATP6/subunit a, MT-ATP8/subunit 8, ATP5ME/subunit e, ATP5MF/subunit f, ATP5MG/subunit g, ATP5MK/subunit k, ATP5MJ/subunit j, ATP5F1C/subunit gamma, ATP5F1D/subunit delta, ATP5F1E/subunit epsilon, ATP5PF/subunit F6, ATP5PB/subunit b, ATP5PD/subunit d, ATP5PO/subunit OSCP. ATP synthase complex consists of a soluble F(1) head domain (subunits alpha(3) and beta(3)) - the catalytic core - and a membrane F(0) domain - the membrane proton channel (subunits c, a, 8, e, f, g, k and j). These two domains are linked by a central stalk (subunits gamma, delta, and epsilon) rotating inside the F1 region and a stationary peripheral stalk (subunits F6, b, d, and OSCP).</text>
</comment>
<comment type="subcellular location">
    <subcellularLocation>
        <location>Mitochondrion membrane</location>
        <topology>Single-pass membrane protein</topology>
    </subcellularLocation>
</comment>
<comment type="similarity">
    <text evidence="4">Belongs to the ATPase protein 8 family.</text>
</comment>
<accession>Q36362</accession>
<sequence>MPQLLPTPWFTIFIYAWMVLLAVIPLKILSYVYPNHNYLRGLQKPSEHSWFWPWS</sequence>
<keyword id="KW-0066">ATP synthesis</keyword>
<keyword id="KW-0138">CF(0)</keyword>
<keyword id="KW-0375">Hydrogen ion transport</keyword>
<keyword id="KW-0406">Ion transport</keyword>
<keyword id="KW-0472">Membrane</keyword>
<keyword id="KW-0496">Mitochondrion</keyword>
<keyword id="KW-1185">Reference proteome</keyword>
<keyword id="KW-0812">Transmembrane</keyword>
<keyword id="KW-1133">Transmembrane helix</keyword>
<keyword id="KW-0813">Transport</keyword>
<evidence type="ECO:0000250" key="1">
    <source>
        <dbReference type="UniProtKB" id="P03928"/>
    </source>
</evidence>
<evidence type="ECO:0000250" key="2">
    <source>
        <dbReference type="UniProtKB" id="P19483"/>
    </source>
</evidence>
<evidence type="ECO:0000255" key="3"/>
<evidence type="ECO:0000305" key="4"/>
<protein>
    <recommendedName>
        <fullName evidence="1">ATP synthase F(0) complex subunit 8</fullName>
    </recommendedName>
    <alternativeName>
        <fullName>A6L</fullName>
    </alternativeName>
    <alternativeName>
        <fullName>F-ATPase subunit 8</fullName>
    </alternativeName>
</protein>
<reference key="1">
    <citation type="journal article" date="1994" name="Curr. Genet.">
        <title>Cloning and characterization of the European seabass, Dicentrarchus labrax, mitochondrial genome.</title>
        <authorList>
            <person name="Venanzetti F."/>
            <person name="Cecconi F."/>
            <person name="Giorgi M."/>
            <person name="Sbordoni V."/>
            <person name="Mariottini P."/>
        </authorList>
    </citation>
    <scope>NUCLEOTIDE SEQUENCE [GENOMIC DNA]</scope>
</reference>
<geneLocation type="mitochondrion"/>
<dbReference type="EMBL" id="X74147">
    <property type="protein sequence ID" value="CAA52244.1"/>
    <property type="molecule type" value="Genomic_DNA"/>
</dbReference>
<dbReference type="PIR" id="S45489">
    <property type="entry name" value="S45489"/>
</dbReference>
<dbReference type="RefSeq" id="YP_009114406.1">
    <property type="nucleotide sequence ID" value="NC_026074.1"/>
</dbReference>
<dbReference type="SMR" id="Q36362"/>
<dbReference type="GeneID" id="22832836"/>
<dbReference type="CTD" id="4509"/>
<dbReference type="OrthoDB" id="8734014at2759"/>
<dbReference type="Proteomes" id="UP000694389">
    <property type="component" value="Unplaced"/>
</dbReference>
<dbReference type="GO" id="GO:0031966">
    <property type="term" value="C:mitochondrial membrane"/>
    <property type="evidence" value="ECO:0007669"/>
    <property type="project" value="UniProtKB-SubCell"/>
</dbReference>
<dbReference type="GO" id="GO:0045259">
    <property type="term" value="C:proton-transporting ATP synthase complex"/>
    <property type="evidence" value="ECO:0007669"/>
    <property type="project" value="UniProtKB-KW"/>
</dbReference>
<dbReference type="GO" id="GO:0015078">
    <property type="term" value="F:proton transmembrane transporter activity"/>
    <property type="evidence" value="ECO:0007669"/>
    <property type="project" value="InterPro"/>
</dbReference>
<dbReference type="GO" id="GO:0015986">
    <property type="term" value="P:proton motive force-driven ATP synthesis"/>
    <property type="evidence" value="ECO:0007669"/>
    <property type="project" value="InterPro"/>
</dbReference>
<dbReference type="InterPro" id="IPR001421">
    <property type="entry name" value="ATP8_metazoa"/>
</dbReference>
<dbReference type="InterPro" id="IPR050635">
    <property type="entry name" value="ATPase_protein_8"/>
</dbReference>
<dbReference type="PANTHER" id="PTHR39937">
    <property type="entry name" value="ATP SYNTHASE PROTEIN 8"/>
    <property type="match status" value="1"/>
</dbReference>
<dbReference type="PANTHER" id="PTHR39937:SF1">
    <property type="entry name" value="ATP SYNTHASE PROTEIN 8"/>
    <property type="match status" value="1"/>
</dbReference>
<dbReference type="Pfam" id="PF00895">
    <property type="entry name" value="ATP-synt_8"/>
    <property type="match status" value="1"/>
</dbReference>
<feature type="chain" id="PRO_0000195519" description="ATP synthase F(0) complex subunit 8">
    <location>
        <begin position="1"/>
        <end position="55"/>
    </location>
</feature>
<feature type="transmembrane region" description="Helical" evidence="3">
    <location>
        <begin position="4"/>
        <end position="24"/>
    </location>
</feature>